<sequence>MKSSVFILSLFLLLERQAAVVGQYGGTKGHFQSSSSGFMLGQKGHLNFGLKGGSEEAAEESIFMQSQHQMFGQDGGDMAQTSVSQEHTGVKGAAICRKGQVSQLKSQESQIKSFRQVKSSGQLKSGGSQLKSFGQVKSSESQLKSFGQVKASGSQLKSFGQVKASGSQLKSYGQMKSSGSQVKSFGQMKSSGSQVKSFGQMKASESQIKSFGQRKSQGGQLQSYGQMKSYGQTKSLESQAKSFGQVKSQSGQMKSSYGQRKSYGEETQLKSFDQDAQLKSYGQQKSQKQSSFSQVKSQSAQLKSFGQQKSLKGFSQQTQQKGFAMDEDLSQVRKQFDDDDLSVQQKSTQQMKTEEDLSQFGQQRQFGQERSQSYKGYLAQYRKKLQEQQQQKNFNQDNFFTKGGAGLYQAQLKG</sequence>
<keyword id="KW-0188">Copulatory plug</keyword>
<keyword id="KW-0903">Direct protein sequencing</keyword>
<keyword id="KW-0873">Pyrrolidone carboxylic acid</keyword>
<keyword id="KW-1185">Reference proteome</keyword>
<keyword id="KW-0677">Repeat</keyword>
<keyword id="KW-0732">Signal</keyword>
<comment type="function">
    <text>The rat seminal vesicle contains six major androgen-dependent secretory proteins referred to as SVS I-VI. The SVS I-III proteins appear to be components of the rat copulatory plug, with the SVS II protein being the major component.</text>
</comment>
<comment type="PTM">
    <text>The repeating unit appears to be involved in the formation of the copulatory plug via a transglutaminase reaction cross-linking glutamine and lysine residues.</text>
</comment>
<protein>
    <recommendedName>
        <fullName>Seminal vesicle secretory protein 2</fullName>
    </recommendedName>
    <alternativeName>
        <fullName>Seminal vesicle secretory protein II</fullName>
        <shortName>SVS II</shortName>
    </alternativeName>
</protein>
<proteinExistence type="evidence at protein level"/>
<feature type="signal peptide">
    <location>
        <begin position="1"/>
        <end position="22"/>
    </location>
</feature>
<feature type="chain" id="PRO_0000022451" description="Seminal vesicle secretory protein 2">
    <location>
        <begin position="23"/>
        <end position="414"/>
    </location>
</feature>
<feature type="repeat" description="1">
    <location>
        <begin position="108"/>
        <end position="120"/>
    </location>
</feature>
<feature type="repeat" description="2">
    <location>
        <begin position="127"/>
        <end position="139"/>
    </location>
</feature>
<feature type="repeat" description="3">
    <location>
        <begin position="140"/>
        <end position="152"/>
    </location>
</feature>
<feature type="repeat" description="4">
    <location>
        <begin position="153"/>
        <end position="165"/>
    </location>
</feature>
<feature type="repeat" description="5">
    <location>
        <begin position="166"/>
        <end position="178"/>
    </location>
</feature>
<feature type="repeat" description="6">
    <location>
        <begin position="179"/>
        <end position="191"/>
    </location>
</feature>
<feature type="repeat" description="7">
    <location>
        <begin position="192"/>
        <end position="204"/>
    </location>
</feature>
<feature type="repeat" description="8">
    <location>
        <begin position="205"/>
        <end position="217"/>
    </location>
</feature>
<feature type="repeat" description="9">
    <location>
        <begin position="224"/>
        <end position="236"/>
    </location>
</feature>
<feature type="repeat" description="10">
    <location>
        <begin position="237"/>
        <end position="249"/>
    </location>
</feature>
<feature type="repeat" description="11">
    <location>
        <begin position="257"/>
        <end position="269"/>
    </location>
</feature>
<feature type="repeat" description="12">
    <location>
        <begin position="275"/>
        <end position="287"/>
    </location>
</feature>
<feature type="repeat" description="13">
    <location>
        <begin position="299"/>
        <end position="311"/>
    </location>
</feature>
<feature type="region of interest" description="13 X 13 AA tandem repeats">
    <location>
        <begin position="108"/>
        <end position="311"/>
    </location>
</feature>
<feature type="region of interest" description="Disordered" evidence="1">
    <location>
        <begin position="170"/>
        <end position="228"/>
    </location>
</feature>
<feature type="region of interest" description="Disordered" evidence="1">
    <location>
        <begin position="240"/>
        <end position="294"/>
    </location>
</feature>
<feature type="region of interest" description="Disordered" evidence="1">
    <location>
        <begin position="306"/>
        <end position="369"/>
    </location>
</feature>
<feature type="compositionally biased region" description="Polar residues" evidence="1">
    <location>
        <begin position="240"/>
        <end position="259"/>
    </location>
</feature>
<feature type="compositionally biased region" description="Low complexity" evidence="1">
    <location>
        <begin position="277"/>
        <end position="294"/>
    </location>
</feature>
<feature type="compositionally biased region" description="Polar residues" evidence="1">
    <location>
        <begin position="306"/>
        <end position="321"/>
    </location>
</feature>
<feature type="compositionally biased region" description="Polar residues" evidence="1">
    <location>
        <begin position="342"/>
        <end position="351"/>
    </location>
</feature>
<feature type="compositionally biased region" description="Low complexity" evidence="1">
    <location>
        <begin position="358"/>
        <end position="369"/>
    </location>
</feature>
<feature type="modified residue" description="Pyrrolidone carboxylic acid" evidence="2">
    <location>
        <position position="23"/>
    </location>
</feature>
<name>SVS2_RAT</name>
<organism>
    <name type="scientific">Rattus norvegicus</name>
    <name type="common">Rat</name>
    <dbReference type="NCBI Taxonomy" id="10116"/>
    <lineage>
        <taxon>Eukaryota</taxon>
        <taxon>Metazoa</taxon>
        <taxon>Chordata</taxon>
        <taxon>Craniata</taxon>
        <taxon>Vertebrata</taxon>
        <taxon>Euteleostomi</taxon>
        <taxon>Mammalia</taxon>
        <taxon>Eutheria</taxon>
        <taxon>Euarchontoglires</taxon>
        <taxon>Glires</taxon>
        <taxon>Rodentia</taxon>
        <taxon>Myomorpha</taxon>
        <taxon>Muroidea</taxon>
        <taxon>Muridae</taxon>
        <taxon>Murinae</taxon>
        <taxon>Rattus</taxon>
    </lineage>
</organism>
<accession>P22006</accession>
<reference key="1">
    <citation type="journal article" date="1990" name="J. Biol. Chem.">
        <title>Structural characterization of the rat seminal vesicle secretion II protein and gene.</title>
        <authorList>
            <person name="Harris S.E."/>
            <person name="Harris M.A."/>
            <person name="Johnson C.M."/>
            <person name="Bean M.F."/>
            <person name="Dodd J.G."/>
            <person name="Matusik R.J."/>
            <person name="Carr S.A."/>
            <person name="Crabb J.W."/>
        </authorList>
    </citation>
    <scope>NUCLEOTIDE SEQUENCE [GENOMIC DNA]</scope>
    <scope>PARTIAL PROTEIN SEQUENCE</scope>
    <scope>PYROGLUTAMATE FORMATION AT GLN-23</scope>
</reference>
<dbReference type="EMBL" id="J05443">
    <property type="protein sequence ID" value="AAA42192.1"/>
    <property type="molecule type" value="Genomic_DNA"/>
</dbReference>
<dbReference type="PIR" id="A36443">
    <property type="entry name" value="A36443"/>
</dbReference>
<dbReference type="STRING" id="10116.ENSRNOP00000018420"/>
<dbReference type="PhosphoSitePlus" id="P22006"/>
<dbReference type="PaxDb" id="10116-ENSRNOP00000018420"/>
<dbReference type="AGR" id="RGD:3790"/>
<dbReference type="RGD" id="3790">
    <property type="gene designation" value="Svs2"/>
</dbReference>
<dbReference type="eggNOG" id="ENOG502T6BW">
    <property type="taxonomic scope" value="Eukaryota"/>
</dbReference>
<dbReference type="InParanoid" id="P22006"/>
<dbReference type="PhylomeDB" id="P22006"/>
<dbReference type="PRO" id="PR:P22006"/>
<dbReference type="Proteomes" id="UP000002494">
    <property type="component" value="Unplaced"/>
</dbReference>
<dbReference type="GO" id="GO:0001669">
    <property type="term" value="C:acrosomal vesicle"/>
    <property type="evidence" value="ECO:0000266"/>
    <property type="project" value="RGD"/>
</dbReference>
<dbReference type="GO" id="GO:0005615">
    <property type="term" value="C:extracellular space"/>
    <property type="evidence" value="ECO:0000266"/>
    <property type="project" value="RGD"/>
</dbReference>
<dbReference type="GO" id="GO:0032991">
    <property type="term" value="C:protein-containing complex"/>
    <property type="evidence" value="ECO:0000266"/>
    <property type="project" value="RGD"/>
</dbReference>
<dbReference type="GO" id="GO:0008270">
    <property type="term" value="F:zinc ion binding"/>
    <property type="evidence" value="ECO:0000266"/>
    <property type="project" value="RGD"/>
</dbReference>
<dbReference type="GO" id="GO:0019731">
    <property type="term" value="P:antibacterial humoral response"/>
    <property type="evidence" value="ECO:0000266"/>
    <property type="project" value="RGD"/>
</dbReference>
<dbReference type="GO" id="GO:0050817">
    <property type="term" value="P:coagulation"/>
    <property type="evidence" value="ECO:0000266"/>
    <property type="project" value="RGD"/>
</dbReference>
<dbReference type="GO" id="GO:0009566">
    <property type="term" value="P:fertilization"/>
    <property type="evidence" value="ECO:0000266"/>
    <property type="project" value="RGD"/>
</dbReference>
<dbReference type="GO" id="GO:0042628">
    <property type="term" value="P:mating plug formation"/>
    <property type="evidence" value="ECO:0007669"/>
    <property type="project" value="UniProtKB-KW"/>
</dbReference>
<dbReference type="GO" id="GO:0090281">
    <property type="term" value="P:negative regulation of calcium ion import"/>
    <property type="evidence" value="ECO:0000266"/>
    <property type="project" value="RGD"/>
</dbReference>
<dbReference type="GO" id="GO:1901318">
    <property type="term" value="P:negative regulation of flagellated sperm motility"/>
    <property type="evidence" value="ECO:0000266"/>
    <property type="project" value="RGD"/>
</dbReference>
<dbReference type="GO" id="GO:0048240">
    <property type="term" value="P:sperm capacitation"/>
    <property type="evidence" value="ECO:0000266"/>
    <property type="project" value="RGD"/>
</dbReference>
<dbReference type="InterPro" id="IPR018942">
    <property type="entry name" value="Seminal_vesicle_protein_repeat"/>
</dbReference>
<dbReference type="InterPro" id="IPR002080">
    <property type="entry name" value="SVP_II_CS"/>
</dbReference>
<dbReference type="PANTHER" id="PTHR10547:SF2">
    <property type="entry name" value="SEMENOGELIN 1"/>
    <property type="match status" value="1"/>
</dbReference>
<dbReference type="PANTHER" id="PTHR10547">
    <property type="entry name" value="SEMENOGELIN/SEMINAL VESICLE SECRETORY PROTEIN"/>
    <property type="match status" value="1"/>
</dbReference>
<dbReference type="Pfam" id="PF10578">
    <property type="entry name" value="SVS_QK"/>
    <property type="match status" value="17"/>
</dbReference>
<dbReference type="PROSITE" id="PS00515">
    <property type="entry name" value="SVP_II"/>
    <property type="match status" value="12"/>
</dbReference>
<gene>
    <name type="primary">Svs2</name>
</gene>
<evidence type="ECO:0000256" key="1">
    <source>
        <dbReference type="SAM" id="MobiDB-lite"/>
    </source>
</evidence>
<evidence type="ECO:0000269" key="2">
    <source>
    </source>
</evidence>